<reference key="1">
    <citation type="journal article" date="2001" name="Proc. Natl. Acad. Sci. U.S.A.">
        <title>Complete genome sequence of Caulobacter crescentus.</title>
        <authorList>
            <person name="Nierman W.C."/>
            <person name="Feldblyum T.V."/>
            <person name="Laub M.T."/>
            <person name="Paulsen I.T."/>
            <person name="Nelson K.E."/>
            <person name="Eisen J.A."/>
            <person name="Heidelberg J.F."/>
            <person name="Alley M.R.K."/>
            <person name="Ohta N."/>
            <person name="Maddock J.R."/>
            <person name="Potocka I."/>
            <person name="Nelson W.C."/>
            <person name="Newton A."/>
            <person name="Stephens C."/>
            <person name="Phadke N.D."/>
            <person name="Ely B."/>
            <person name="DeBoy R.T."/>
            <person name="Dodson R.J."/>
            <person name="Durkin A.S."/>
            <person name="Gwinn M.L."/>
            <person name="Haft D.H."/>
            <person name="Kolonay J.F."/>
            <person name="Smit J."/>
            <person name="Craven M.B."/>
            <person name="Khouri H.M."/>
            <person name="Shetty J."/>
            <person name="Berry K.J."/>
            <person name="Utterback T.R."/>
            <person name="Tran K."/>
            <person name="Wolf A.M."/>
            <person name="Vamathevan J.J."/>
            <person name="Ermolaeva M.D."/>
            <person name="White O."/>
            <person name="Salzberg S.L."/>
            <person name="Venter J.C."/>
            <person name="Shapiro L."/>
            <person name="Fraser C.M."/>
        </authorList>
    </citation>
    <scope>NUCLEOTIDE SEQUENCE [LARGE SCALE GENOMIC DNA]</scope>
    <source>
        <strain>ATCC 19089 / CIP 103742 / CB 15</strain>
    </source>
</reference>
<sequence length="98" mass="10201">MADGVAVTLVVRLTPRGGRDAAEGWALDADGRLYLKVRVASPPVEGAANAALIAFLAKTLKIPRSAVRLAAGETARLKRLELEGVDPADVARAFGPPN</sequence>
<proteinExistence type="inferred from homology"/>
<comment type="similarity">
    <text evidence="1">Belongs to the UPF0235 family.</text>
</comment>
<keyword id="KW-1185">Reference proteome</keyword>
<protein>
    <recommendedName>
        <fullName evidence="1">UPF0235 protein CC_3622</fullName>
    </recommendedName>
</protein>
<evidence type="ECO:0000255" key="1">
    <source>
        <dbReference type="HAMAP-Rule" id="MF_00634"/>
    </source>
</evidence>
<accession>Q9A2E3</accession>
<dbReference type="EMBL" id="AE005673">
    <property type="protein sequence ID" value="AAK25584.1"/>
    <property type="molecule type" value="Genomic_DNA"/>
</dbReference>
<dbReference type="PIR" id="D87698">
    <property type="entry name" value="D87698"/>
</dbReference>
<dbReference type="RefSeq" id="NP_422416.1">
    <property type="nucleotide sequence ID" value="NC_002696.2"/>
</dbReference>
<dbReference type="RefSeq" id="WP_010921449.1">
    <property type="nucleotide sequence ID" value="NC_002696.2"/>
</dbReference>
<dbReference type="SMR" id="Q9A2E3"/>
<dbReference type="STRING" id="190650.CC_3622"/>
<dbReference type="EnsemblBacteria" id="AAK25584">
    <property type="protein sequence ID" value="AAK25584"/>
    <property type="gene ID" value="CC_3622"/>
</dbReference>
<dbReference type="KEGG" id="ccr:CC_3622"/>
<dbReference type="PATRIC" id="fig|190650.5.peg.3625"/>
<dbReference type="eggNOG" id="COG1872">
    <property type="taxonomic scope" value="Bacteria"/>
</dbReference>
<dbReference type="HOGENOM" id="CLU_130694_3_1_5"/>
<dbReference type="BioCyc" id="CAULO:CC3622-MONOMER"/>
<dbReference type="Proteomes" id="UP000001816">
    <property type="component" value="Chromosome"/>
</dbReference>
<dbReference type="Gene3D" id="3.30.1200.10">
    <property type="entry name" value="YggU-like"/>
    <property type="match status" value="1"/>
</dbReference>
<dbReference type="HAMAP" id="MF_00634">
    <property type="entry name" value="UPF0235"/>
    <property type="match status" value="1"/>
</dbReference>
<dbReference type="InterPro" id="IPR003746">
    <property type="entry name" value="DUF167"/>
</dbReference>
<dbReference type="InterPro" id="IPR036591">
    <property type="entry name" value="YggU-like_sf"/>
</dbReference>
<dbReference type="NCBIfam" id="TIGR00251">
    <property type="entry name" value="DUF167 family protein"/>
    <property type="match status" value="1"/>
</dbReference>
<dbReference type="Pfam" id="PF02594">
    <property type="entry name" value="DUF167"/>
    <property type="match status" value="1"/>
</dbReference>
<dbReference type="SMART" id="SM01152">
    <property type="entry name" value="DUF167"/>
    <property type="match status" value="1"/>
</dbReference>
<dbReference type="SUPFAM" id="SSF69786">
    <property type="entry name" value="YggU-like"/>
    <property type="match status" value="1"/>
</dbReference>
<organism>
    <name type="scientific">Caulobacter vibrioides (strain ATCC 19089 / CIP 103742 / CB 15)</name>
    <name type="common">Caulobacter crescentus</name>
    <dbReference type="NCBI Taxonomy" id="190650"/>
    <lineage>
        <taxon>Bacteria</taxon>
        <taxon>Pseudomonadati</taxon>
        <taxon>Pseudomonadota</taxon>
        <taxon>Alphaproteobacteria</taxon>
        <taxon>Caulobacterales</taxon>
        <taxon>Caulobacteraceae</taxon>
        <taxon>Caulobacter</taxon>
    </lineage>
</organism>
<gene>
    <name type="ordered locus">CC_3622</name>
</gene>
<feature type="chain" id="PRO_0000139435" description="UPF0235 protein CC_3622">
    <location>
        <begin position="1"/>
        <end position="98"/>
    </location>
</feature>
<name>Y3622_CAUVC</name>